<keyword id="KW-0067">ATP-binding</keyword>
<keyword id="KW-0436">Ligase</keyword>
<keyword id="KW-0547">Nucleotide-binding</keyword>
<keyword id="KW-0648">Protein biosynthesis</keyword>
<keyword id="KW-1185">Reference proteome</keyword>
<evidence type="ECO:0000255" key="1">
    <source>
        <dbReference type="HAMAP-Rule" id="MF_00122"/>
    </source>
</evidence>
<feature type="chain" id="PRO_1000076187" description="Aspartyl/glutamyl-tRNA(Asn/Gln) amidotransferase subunit C">
    <location>
        <begin position="1"/>
        <end position="93"/>
    </location>
</feature>
<dbReference type="EC" id="6.3.5.-" evidence="1"/>
<dbReference type="EMBL" id="CP000477">
    <property type="protein sequence ID" value="ABK13977.1"/>
    <property type="molecule type" value="Genomic_DNA"/>
</dbReference>
<dbReference type="RefSeq" id="WP_011695376.1">
    <property type="nucleotide sequence ID" value="NC_008553.1"/>
</dbReference>
<dbReference type="SMR" id="A0B5K3"/>
<dbReference type="STRING" id="349307.Mthe_0178"/>
<dbReference type="GeneID" id="4462160"/>
<dbReference type="KEGG" id="mtp:Mthe_0178"/>
<dbReference type="HOGENOM" id="CLU_105899_6_1_2"/>
<dbReference type="OrthoDB" id="15210at2157"/>
<dbReference type="Proteomes" id="UP000000674">
    <property type="component" value="Chromosome"/>
</dbReference>
<dbReference type="GO" id="GO:0050566">
    <property type="term" value="F:asparaginyl-tRNA synthase (glutamine-hydrolyzing) activity"/>
    <property type="evidence" value="ECO:0007669"/>
    <property type="project" value="RHEA"/>
</dbReference>
<dbReference type="GO" id="GO:0005524">
    <property type="term" value="F:ATP binding"/>
    <property type="evidence" value="ECO:0007669"/>
    <property type="project" value="UniProtKB-KW"/>
</dbReference>
<dbReference type="GO" id="GO:0050567">
    <property type="term" value="F:glutaminyl-tRNA synthase (glutamine-hydrolyzing) activity"/>
    <property type="evidence" value="ECO:0007669"/>
    <property type="project" value="UniProtKB-UniRule"/>
</dbReference>
<dbReference type="GO" id="GO:0070681">
    <property type="term" value="P:glutaminyl-tRNAGln biosynthesis via transamidation"/>
    <property type="evidence" value="ECO:0007669"/>
    <property type="project" value="TreeGrafter"/>
</dbReference>
<dbReference type="GO" id="GO:0006450">
    <property type="term" value="P:regulation of translational fidelity"/>
    <property type="evidence" value="ECO:0007669"/>
    <property type="project" value="InterPro"/>
</dbReference>
<dbReference type="GO" id="GO:0006412">
    <property type="term" value="P:translation"/>
    <property type="evidence" value="ECO:0007669"/>
    <property type="project" value="UniProtKB-UniRule"/>
</dbReference>
<dbReference type="Gene3D" id="1.10.20.60">
    <property type="entry name" value="Glu-tRNAGln amidotransferase C subunit, N-terminal domain"/>
    <property type="match status" value="1"/>
</dbReference>
<dbReference type="HAMAP" id="MF_00122">
    <property type="entry name" value="GatC"/>
    <property type="match status" value="1"/>
</dbReference>
<dbReference type="InterPro" id="IPR036113">
    <property type="entry name" value="Asp/Glu-ADT_sf_sub_c"/>
</dbReference>
<dbReference type="InterPro" id="IPR003837">
    <property type="entry name" value="GatC"/>
</dbReference>
<dbReference type="NCBIfam" id="TIGR00135">
    <property type="entry name" value="gatC"/>
    <property type="match status" value="1"/>
</dbReference>
<dbReference type="PANTHER" id="PTHR15004">
    <property type="entry name" value="GLUTAMYL-TRNA(GLN) AMIDOTRANSFERASE SUBUNIT C, MITOCHONDRIAL"/>
    <property type="match status" value="1"/>
</dbReference>
<dbReference type="PANTHER" id="PTHR15004:SF0">
    <property type="entry name" value="GLUTAMYL-TRNA(GLN) AMIDOTRANSFERASE SUBUNIT C, MITOCHONDRIAL"/>
    <property type="match status" value="1"/>
</dbReference>
<dbReference type="Pfam" id="PF02686">
    <property type="entry name" value="GatC"/>
    <property type="match status" value="1"/>
</dbReference>
<dbReference type="SUPFAM" id="SSF141000">
    <property type="entry name" value="Glu-tRNAGln amidotransferase C subunit"/>
    <property type="match status" value="1"/>
</dbReference>
<name>GATC_METTP</name>
<sequence length="93" mass="10956">MITIKDVEHISWLASIRVSEEEREELVAQFNTILDYFQQLDEVDTEGVEPTYRVVDLANVFREDVPRDSLTQDEALRNAPRREEGYFRSPRIV</sequence>
<comment type="function">
    <text evidence="1">Allows the formation of correctly charged Asn-tRNA(Asn) or Gln-tRNA(Gln) through the transamidation of misacylated Asp-tRNA(Asn) or Glu-tRNA(Gln) in organisms which lack either or both of asparaginyl-tRNA or glutaminyl-tRNA synthetases. The reaction takes place in the presence of glutamine and ATP through an activated phospho-Asp-tRNA(Asn) or phospho-Glu-tRNA(Gln).</text>
</comment>
<comment type="catalytic activity">
    <reaction evidence="1">
        <text>L-glutamyl-tRNA(Gln) + L-glutamine + ATP + H2O = L-glutaminyl-tRNA(Gln) + L-glutamate + ADP + phosphate + H(+)</text>
        <dbReference type="Rhea" id="RHEA:17521"/>
        <dbReference type="Rhea" id="RHEA-COMP:9681"/>
        <dbReference type="Rhea" id="RHEA-COMP:9684"/>
        <dbReference type="ChEBI" id="CHEBI:15377"/>
        <dbReference type="ChEBI" id="CHEBI:15378"/>
        <dbReference type="ChEBI" id="CHEBI:29985"/>
        <dbReference type="ChEBI" id="CHEBI:30616"/>
        <dbReference type="ChEBI" id="CHEBI:43474"/>
        <dbReference type="ChEBI" id="CHEBI:58359"/>
        <dbReference type="ChEBI" id="CHEBI:78520"/>
        <dbReference type="ChEBI" id="CHEBI:78521"/>
        <dbReference type="ChEBI" id="CHEBI:456216"/>
    </reaction>
</comment>
<comment type="catalytic activity">
    <reaction evidence="1">
        <text>L-aspartyl-tRNA(Asn) + L-glutamine + ATP + H2O = L-asparaginyl-tRNA(Asn) + L-glutamate + ADP + phosphate + 2 H(+)</text>
        <dbReference type="Rhea" id="RHEA:14513"/>
        <dbReference type="Rhea" id="RHEA-COMP:9674"/>
        <dbReference type="Rhea" id="RHEA-COMP:9677"/>
        <dbReference type="ChEBI" id="CHEBI:15377"/>
        <dbReference type="ChEBI" id="CHEBI:15378"/>
        <dbReference type="ChEBI" id="CHEBI:29985"/>
        <dbReference type="ChEBI" id="CHEBI:30616"/>
        <dbReference type="ChEBI" id="CHEBI:43474"/>
        <dbReference type="ChEBI" id="CHEBI:58359"/>
        <dbReference type="ChEBI" id="CHEBI:78515"/>
        <dbReference type="ChEBI" id="CHEBI:78516"/>
        <dbReference type="ChEBI" id="CHEBI:456216"/>
    </reaction>
</comment>
<comment type="subunit">
    <text evidence="1">Heterotrimer of A, B and C subunits.</text>
</comment>
<comment type="similarity">
    <text evidence="1">Belongs to the GatC family.</text>
</comment>
<proteinExistence type="inferred from homology"/>
<organism>
    <name type="scientific">Methanothrix thermoacetophila (strain DSM 6194 / JCM 14653 / NBRC 101360 / PT)</name>
    <name type="common">Methanosaeta thermophila</name>
    <dbReference type="NCBI Taxonomy" id="349307"/>
    <lineage>
        <taxon>Archaea</taxon>
        <taxon>Methanobacteriati</taxon>
        <taxon>Methanobacteriota</taxon>
        <taxon>Stenosarchaea group</taxon>
        <taxon>Methanomicrobia</taxon>
        <taxon>Methanotrichales</taxon>
        <taxon>Methanotrichaceae</taxon>
        <taxon>Methanothrix</taxon>
    </lineage>
</organism>
<gene>
    <name evidence="1" type="primary">gatC</name>
    <name type="ordered locus">Mthe_0178</name>
</gene>
<protein>
    <recommendedName>
        <fullName evidence="1">Aspartyl/glutamyl-tRNA(Asn/Gln) amidotransferase subunit C</fullName>
        <shortName evidence="1">Asp/Glu-ADT subunit C</shortName>
        <ecNumber evidence="1">6.3.5.-</ecNumber>
    </recommendedName>
</protein>
<reference key="1">
    <citation type="submission" date="2006-10" db="EMBL/GenBank/DDBJ databases">
        <title>Complete sequence of Methanosaeta thermophila PT.</title>
        <authorList>
            <consortium name="US DOE Joint Genome Institute"/>
            <person name="Copeland A."/>
            <person name="Lucas S."/>
            <person name="Lapidus A."/>
            <person name="Barry K."/>
            <person name="Detter J.C."/>
            <person name="Glavina del Rio T."/>
            <person name="Hammon N."/>
            <person name="Israni S."/>
            <person name="Pitluck S."/>
            <person name="Chain P."/>
            <person name="Malfatti S."/>
            <person name="Shin M."/>
            <person name="Vergez L."/>
            <person name="Schmutz J."/>
            <person name="Larimer F."/>
            <person name="Land M."/>
            <person name="Hauser L."/>
            <person name="Kyrpides N."/>
            <person name="Kim E."/>
            <person name="Smith K.S."/>
            <person name="Ingram-Smith C."/>
            <person name="Richardson P."/>
        </authorList>
    </citation>
    <scope>NUCLEOTIDE SEQUENCE [LARGE SCALE GENOMIC DNA]</scope>
    <source>
        <strain>DSM 6194 / JCM 14653 / NBRC 101360 / PT</strain>
    </source>
</reference>
<accession>A0B5K3</accession>